<name>MMPLB_MYCTU</name>
<keyword id="KW-0002">3D-structure</keyword>
<keyword id="KW-0997">Cell inner membrane</keyword>
<keyword id="KW-1003">Cell membrane</keyword>
<keyword id="KW-0472">Membrane</keyword>
<keyword id="KW-1185">Reference proteome</keyword>
<keyword id="KW-0812">Transmembrane</keyword>
<keyword id="KW-1133">Transmembrane helix</keyword>
<keyword id="KW-0813">Transport</keyword>
<keyword id="KW-0843">Virulence</keyword>
<protein>
    <recommendedName>
        <fullName evidence="6">Heme uptake protein MmpL11</fullName>
    </recommendedName>
</protein>
<reference key="1">
    <citation type="journal article" date="1998" name="Nature">
        <title>Deciphering the biology of Mycobacterium tuberculosis from the complete genome sequence.</title>
        <authorList>
            <person name="Cole S.T."/>
            <person name="Brosch R."/>
            <person name="Parkhill J."/>
            <person name="Garnier T."/>
            <person name="Churcher C.M."/>
            <person name="Harris D.E."/>
            <person name="Gordon S.V."/>
            <person name="Eiglmeier K."/>
            <person name="Gas S."/>
            <person name="Barry C.E. III"/>
            <person name="Tekaia F."/>
            <person name="Badcock K."/>
            <person name="Basham D."/>
            <person name="Brown D."/>
            <person name="Chillingworth T."/>
            <person name="Connor R."/>
            <person name="Davies R.M."/>
            <person name="Devlin K."/>
            <person name="Feltwell T."/>
            <person name="Gentles S."/>
            <person name="Hamlin N."/>
            <person name="Holroyd S."/>
            <person name="Hornsby T."/>
            <person name="Jagels K."/>
            <person name="Krogh A."/>
            <person name="McLean J."/>
            <person name="Moule S."/>
            <person name="Murphy L.D."/>
            <person name="Oliver S."/>
            <person name="Osborne J."/>
            <person name="Quail M.A."/>
            <person name="Rajandream M.A."/>
            <person name="Rogers J."/>
            <person name="Rutter S."/>
            <person name="Seeger K."/>
            <person name="Skelton S."/>
            <person name="Squares S."/>
            <person name="Squares R."/>
            <person name="Sulston J.E."/>
            <person name="Taylor K."/>
            <person name="Whitehead S."/>
            <person name="Barrell B.G."/>
        </authorList>
    </citation>
    <scope>NUCLEOTIDE SEQUENCE [LARGE SCALE GENOMIC DNA]</scope>
    <source>
        <strain>ATCC 25618 / H37Rv</strain>
    </source>
</reference>
<reference key="2">
    <citation type="journal article" date="2005" name="Infect. Immun.">
        <title>Contribution of the Mycobacterium tuberculosis MmpL protein family to virulence and drug resistance.</title>
        <authorList>
            <person name="Domenech P."/>
            <person name="Reed M.B."/>
            <person name="Barry C.E. III"/>
        </authorList>
    </citation>
    <scope>FUNCTION IN VIRULENCE</scope>
    <scope>DISRUPTION PHENOTYPE</scope>
    <source>
        <strain>H37Rv</strain>
    </source>
</reference>
<reference key="3">
    <citation type="journal article" date="2011" name="Mol. Cell. Proteomics">
        <title>Proteogenomic analysis of Mycobacterium tuberculosis by high resolution mass spectrometry.</title>
        <authorList>
            <person name="Kelkar D.S."/>
            <person name="Kumar D."/>
            <person name="Kumar P."/>
            <person name="Balakrishnan L."/>
            <person name="Muthusamy B."/>
            <person name="Yadav A.K."/>
            <person name="Shrivastava P."/>
            <person name="Marimuthu A."/>
            <person name="Anand S."/>
            <person name="Sundaram H."/>
            <person name="Kingsbury R."/>
            <person name="Harsha H.C."/>
            <person name="Nair B."/>
            <person name="Prasad T.S."/>
            <person name="Chauhan D.S."/>
            <person name="Katoch K."/>
            <person name="Katoch V.M."/>
            <person name="Kumar P."/>
            <person name="Chaerkady R."/>
            <person name="Ramachandran S."/>
            <person name="Dash D."/>
            <person name="Pandey A."/>
        </authorList>
    </citation>
    <scope>IDENTIFICATION BY MASS SPECTROMETRY [LARGE SCALE ANALYSIS]</scope>
    <source>
        <strain>ATCC 25618 / H37Rv</strain>
    </source>
</reference>
<reference key="4">
    <citation type="journal article" date="2011" name="Proc. Natl. Acad. Sci. U.S.A.">
        <title>Discovery and characterization of a unique mycobacterial heme acquisition system.</title>
        <authorList>
            <person name="Tullius M.V."/>
            <person name="Harmston C.A."/>
            <person name="Owens C.P."/>
            <person name="Chim N."/>
            <person name="Morse R.P."/>
            <person name="McMath L.M."/>
            <person name="Iniguez A."/>
            <person name="Kimmey J.M."/>
            <person name="Sawaya M.R."/>
            <person name="Whitelegge J.P."/>
            <person name="Horwitz M.A."/>
            <person name="Goulding C.W."/>
        </authorList>
    </citation>
    <scope>PROBABLE FUNCTION IN HEME UPTAKE</scope>
    <scope>HEME BINDING</scope>
</reference>
<reference key="5">
    <citation type="journal article" date="2013" name="J. Biol. Chem.">
        <title>The Mycobacterium tuberculosis secreted protein Rv0203 transfers heme to membrane proteins MmpL3 and MmpL11.</title>
        <authorList>
            <person name="Owens C.P."/>
            <person name="Chim N."/>
            <person name="Graves A.B."/>
            <person name="Harmston C.A."/>
            <person name="Iniguez A."/>
            <person name="Contreras H."/>
            <person name="Liptak M.D."/>
            <person name="Goulding C.W."/>
        </authorList>
    </citation>
    <scope>FUNCTION IN HEME UPTAKE</scope>
    <scope>HEME BINDING</scope>
</reference>
<reference key="6">
    <citation type="journal article" date="2013" name="J. Biol. Chem.">
        <title>MmpL11 protein transports mycolic acid-containing lipids to the mycobacterial cell wall and contributes to biofilm formation in Mycobacterium smegmatis.</title>
        <authorList>
            <person name="Pacheco S.A."/>
            <person name="Hsu F.F."/>
            <person name="Powers K.M."/>
            <person name="Purdy G.E."/>
        </authorList>
    </citation>
    <scope>PUTATIVE FUNCTION IN MYCOLIC ACID-CONTAINING LIPIDS EXPORT</scope>
    <source>
        <strain>H37Rv</strain>
    </source>
</reference>
<dbReference type="EMBL" id="AL123456">
    <property type="protein sequence ID" value="CCP42930.1"/>
    <property type="molecule type" value="Genomic_DNA"/>
</dbReference>
<dbReference type="PIR" id="G70838">
    <property type="entry name" value="G70838"/>
</dbReference>
<dbReference type="RefSeq" id="NP_214716.1">
    <property type="nucleotide sequence ID" value="NC_000962.3"/>
</dbReference>
<dbReference type="RefSeq" id="WP_003401190.1">
    <property type="nucleotide sequence ID" value="NZ_NVQJ01000001.1"/>
</dbReference>
<dbReference type="PDB" id="4Y0L">
    <property type="method" value="X-ray"/>
    <property type="resolution" value="2.40 A"/>
    <property type="chains" value="A=424-511"/>
</dbReference>
<dbReference type="PDBsum" id="4Y0L"/>
<dbReference type="SMR" id="P9WJT9"/>
<dbReference type="STRING" id="83332.Rv0202c"/>
<dbReference type="PaxDb" id="83332-Rv0202c"/>
<dbReference type="DNASU" id="886750"/>
<dbReference type="GeneID" id="886750"/>
<dbReference type="KEGG" id="mtu:Rv0202c"/>
<dbReference type="KEGG" id="mtv:RVBD_0202c"/>
<dbReference type="TubercuList" id="Rv0202c"/>
<dbReference type="eggNOG" id="COG2409">
    <property type="taxonomic scope" value="Bacteria"/>
</dbReference>
<dbReference type="InParanoid" id="P9WJT9"/>
<dbReference type="OrthoDB" id="7051771at2"/>
<dbReference type="PhylomeDB" id="P9WJT9"/>
<dbReference type="EvolutionaryTrace" id="P9WJT9"/>
<dbReference type="Proteomes" id="UP000001584">
    <property type="component" value="Chromosome"/>
</dbReference>
<dbReference type="GO" id="GO:0005829">
    <property type="term" value="C:cytosol"/>
    <property type="evidence" value="ECO:0007005"/>
    <property type="project" value="MTBBASE"/>
</dbReference>
<dbReference type="GO" id="GO:0009274">
    <property type="term" value="C:peptidoglycan-based cell wall"/>
    <property type="evidence" value="ECO:0007005"/>
    <property type="project" value="MTBBASE"/>
</dbReference>
<dbReference type="GO" id="GO:0005886">
    <property type="term" value="C:plasma membrane"/>
    <property type="evidence" value="ECO:0007005"/>
    <property type="project" value="MTBBASE"/>
</dbReference>
<dbReference type="FunFam" id="1.20.1640.10:FF:000049">
    <property type="entry name" value="Transmembrane transport protein MmpL11"/>
    <property type="match status" value="1"/>
</dbReference>
<dbReference type="Gene3D" id="1.20.1640.10">
    <property type="entry name" value="Multidrug efflux transporter AcrB transmembrane domain"/>
    <property type="match status" value="2"/>
</dbReference>
<dbReference type="InterPro" id="IPR004869">
    <property type="entry name" value="MMPL_dom"/>
</dbReference>
<dbReference type="InterPro" id="IPR050545">
    <property type="entry name" value="Mycobact_MmpL"/>
</dbReference>
<dbReference type="InterPro" id="IPR000731">
    <property type="entry name" value="SSD"/>
</dbReference>
<dbReference type="PANTHER" id="PTHR33406">
    <property type="entry name" value="MEMBRANE PROTEIN MJ1562-RELATED"/>
    <property type="match status" value="1"/>
</dbReference>
<dbReference type="PANTHER" id="PTHR33406:SF13">
    <property type="entry name" value="MEMBRANE PROTEIN YDFJ"/>
    <property type="match status" value="1"/>
</dbReference>
<dbReference type="Pfam" id="PF03176">
    <property type="entry name" value="MMPL"/>
    <property type="match status" value="2"/>
</dbReference>
<dbReference type="SUPFAM" id="SSF82866">
    <property type="entry name" value="Multidrug efflux transporter AcrB transmembrane domain"/>
    <property type="match status" value="2"/>
</dbReference>
<dbReference type="PROSITE" id="PS50156">
    <property type="entry name" value="SSD"/>
    <property type="match status" value="1"/>
</dbReference>
<evidence type="ECO:0000255" key="1"/>
<evidence type="ECO:0000269" key="2">
    <source>
    </source>
</evidence>
<evidence type="ECO:0000269" key="3">
    <source>
    </source>
</evidence>
<evidence type="ECO:0000269" key="4">
    <source>
    </source>
</evidence>
<evidence type="ECO:0000303" key="5">
    <source>
    </source>
</evidence>
<evidence type="ECO:0000305" key="6"/>
<evidence type="ECO:0000305" key="7">
    <source>
    </source>
</evidence>
<evidence type="ECO:0007829" key="8">
    <source>
        <dbReference type="PDB" id="4Y0L"/>
    </source>
</evidence>
<accession>P9WJT9</accession>
<accession>L0T2Z6</accession>
<accession>O53653</accession>
<accession>P65374</accession>
<feature type="chain" id="PRO_0000103577" description="Heme uptake protein MmpL11">
    <location>
        <begin position="1"/>
        <end position="966"/>
    </location>
</feature>
<feature type="transmembrane region" description="Helical" evidence="1">
    <location>
        <begin position="13"/>
        <end position="33"/>
    </location>
</feature>
<feature type="transmembrane region" description="Helical" evidence="1">
    <location>
        <begin position="188"/>
        <end position="208"/>
    </location>
</feature>
<feature type="transmembrane region" description="Helical" evidence="1">
    <location>
        <begin position="214"/>
        <end position="234"/>
    </location>
</feature>
<feature type="transmembrane region" description="Helical" evidence="1">
    <location>
        <begin position="235"/>
        <end position="255"/>
    </location>
</feature>
<feature type="transmembrane region" description="Helical" evidence="1">
    <location>
        <begin position="279"/>
        <end position="299"/>
    </location>
</feature>
<feature type="transmembrane region" description="Helical" evidence="1">
    <location>
        <begin position="311"/>
        <end position="331"/>
    </location>
</feature>
<feature type="transmembrane region" description="Helical" evidence="1">
    <location>
        <begin position="373"/>
        <end position="393"/>
    </location>
</feature>
<feature type="transmembrane region" description="Helical" evidence="1">
    <location>
        <begin position="527"/>
        <end position="547"/>
    </location>
</feature>
<feature type="transmembrane region" description="Helical" evidence="1">
    <location>
        <begin position="557"/>
        <end position="577"/>
    </location>
</feature>
<feature type="transmembrane region" description="Helical" evidence="1">
    <location>
        <begin position="595"/>
        <end position="615"/>
    </location>
</feature>
<feature type="transmembrane region" description="Helical" evidence="1">
    <location>
        <begin position="646"/>
        <end position="666"/>
    </location>
</feature>
<feature type="transmembrane region" description="Helical" evidence="1">
    <location>
        <begin position="668"/>
        <end position="688"/>
    </location>
</feature>
<feature type="strand" evidence="8">
    <location>
        <begin position="425"/>
        <end position="430"/>
    </location>
</feature>
<feature type="strand" evidence="8">
    <location>
        <begin position="432"/>
        <end position="434"/>
    </location>
</feature>
<feature type="helix" evidence="8">
    <location>
        <begin position="439"/>
        <end position="441"/>
    </location>
</feature>
<feature type="helix" evidence="8">
    <location>
        <begin position="442"/>
        <end position="452"/>
    </location>
</feature>
<feature type="strand" evidence="8">
    <location>
        <begin position="471"/>
        <end position="478"/>
    </location>
</feature>
<feature type="helix" evidence="8">
    <location>
        <begin position="489"/>
        <end position="503"/>
    </location>
</feature>
<feature type="strand" evidence="8">
    <location>
        <begin position="506"/>
        <end position="510"/>
    </location>
</feature>
<comment type="function">
    <text evidence="2 3 4">Part of a heme-iron acquisition system. Receives heme from the heme-binding protein Rv0203 and transports it into the mycobacterial cell. Contributes to virulence.</text>
</comment>
<comment type="function">
    <text evidence="5">Could also transport the mycolic acid-containing lipids monomeromycolyl diacylglycerol (MMDAG) and mycolate ester wax (WE) to the bacterial surface.</text>
</comment>
<comment type="subcellular location">
    <subcellularLocation>
        <location evidence="7">Cell inner membrane</location>
        <topology evidence="1">Multi-pass membrane protein</topology>
    </subcellularLocation>
</comment>
<comment type="disruption phenotype">
    <text evidence="2">Inactivation increases mouse survival. Mutants show growth patterns similar to the wild-type strain during the active growth phase, but they are attenuated for survival in the chronic stages of infection.</text>
</comment>
<comment type="similarity">
    <text evidence="6">Belongs to the resistance-nodulation-cell division (RND) (TC 2.A.6) family. MmpL subfamily.</text>
</comment>
<sequence length="966" mass="103502">MMRLSRNLRRCRWLVFTGWLLALVPAVYLAMTQSGNLTGGGFEVAGSQSLLVHDQLDAHYPDRGAPALALVAAPRPDASYQDIDNAVALLRQIASELPGVTEAPNPTQRPPQPDRPYVVSLRLDARNAGTSDVAKKLRDRIGVKGDQSGQTANGKVRLYVIGQGALSAAAAANTKHDIANAERWNLPIILMVLVAVFGSLAAAAIPLALAVCTVVITMGLVFVLSMHTTMSVFVTSTVSMFGIALAVDYSLFILMRYREELRCGRRPPDAVDAAMATSGLAVVLSGMTVIASLTGIYLINTPALRSMATGAILAVAVAMLTSATLTPAVLATFARAAAKRSALVHWSRRPASTQSWFWSRWVGWVMRRPWITALAASTVLLVMAAPATLMVLGNSLLRQFDSSHEIRTGAAAAAQALGPGALGPVQVLVRFDAGGASAPEHSQTIAAIRHRIAQAPNVVSVAPPRFADDNGSALLSAVLSVDPEDLGARDTITWMRTQLPRVAGAAQVDVGGPTALIKDFDDRVSATQPLVLVFVAVIAFLMLLISIRSVFLAFKGVLMTLLSVAAAYGSLVMVFQWGWARGLGFPALHSIDSTVPPLVLAMTFGLSMDYEIFLLTRIRERFLQTGQTRDAVAYGVRTSARTITSAALIMIAVFCGFAFAGMPLVAEIGVACAVAIAVDATVVRLVLVPALMAMFDRWNWWLPRWLAHILPSVDFDRPLPKVDLGDVVVIPDDFAAAIPPSADVRMVLKSAAKLKRLAPDAICVTDPLAFTGCGCDGKALDQVQLAYRNGIARAISWGQRPVHPVTVWRKRLAVALDALQTTTWECGGVQTHRAGPGYRRRSPVETTNVALPTGDRLQIPTGAETLRFKGYLIMSRNSSHDYADFADLVDTMAPETAAAVLAGMDRYYSCQAPGRQWMATQLVGRLADPQPSDLGDQSPGADAQAKWEEVRRRCLSVAVAMLEEAR</sequence>
<organism>
    <name type="scientific">Mycobacterium tuberculosis (strain ATCC 25618 / H37Rv)</name>
    <dbReference type="NCBI Taxonomy" id="83332"/>
    <lineage>
        <taxon>Bacteria</taxon>
        <taxon>Bacillati</taxon>
        <taxon>Actinomycetota</taxon>
        <taxon>Actinomycetes</taxon>
        <taxon>Mycobacteriales</taxon>
        <taxon>Mycobacteriaceae</taxon>
        <taxon>Mycobacterium</taxon>
        <taxon>Mycobacterium tuberculosis complex</taxon>
    </lineage>
</organism>
<gene>
    <name type="primary">mmpL11</name>
    <name type="ordered locus">Rv0202c</name>
    <name type="ORF">MTV033.10c</name>
</gene>
<proteinExistence type="evidence at protein level"/>